<organism>
    <name type="scientific">Listeria innocua serovar 6a (strain ATCC BAA-680 / CLIP 11262)</name>
    <dbReference type="NCBI Taxonomy" id="272626"/>
    <lineage>
        <taxon>Bacteria</taxon>
        <taxon>Bacillati</taxon>
        <taxon>Bacillota</taxon>
        <taxon>Bacilli</taxon>
        <taxon>Bacillales</taxon>
        <taxon>Listeriaceae</taxon>
        <taxon>Listeria</taxon>
    </lineage>
</organism>
<sequence>MPEMPEVENVRATLQELVPGKKIDQVIVRVPKMIVATPPDEFVHMLVGQEIEAVRRRGKFLLFDLTNCTILSHLRMEGKFRLMDENEEVTKHTHIIFHFEDHTELRFLDVRKFGTMEVTNKYGESETKSIKKLGPEPLTPAFTLADFATGVKKTSRAIKTALLDQKLVAGVGNIYADEICFEAKVHPERAANSLSDKEINRIFEATKSIMTEAVALGGSTVRTYVNSQGKLGQYQDKLKVYGKTGEPCVICGTPIEKIKLNGRGTHFCPHCQK</sequence>
<accession>Q92BF1</accession>
<protein>
    <recommendedName>
        <fullName evidence="2">Formamidopyrimidine-DNA glycosylase</fullName>
        <shortName evidence="2">Fapy-DNA glycosylase</shortName>
        <ecNumber evidence="2">3.2.2.23</ecNumber>
    </recommendedName>
    <alternativeName>
        <fullName evidence="2">DNA-(apurinic or apyrimidinic site) lyase MutM</fullName>
        <shortName evidence="2">AP lyase MutM</shortName>
        <ecNumber evidence="2">4.2.99.18</ecNumber>
    </alternativeName>
</protein>
<evidence type="ECO:0000250" key="1"/>
<evidence type="ECO:0000255" key="2">
    <source>
        <dbReference type="HAMAP-Rule" id="MF_00103"/>
    </source>
</evidence>
<keyword id="KW-0227">DNA damage</keyword>
<keyword id="KW-0234">DNA repair</keyword>
<keyword id="KW-0238">DNA-binding</keyword>
<keyword id="KW-0326">Glycosidase</keyword>
<keyword id="KW-0378">Hydrolase</keyword>
<keyword id="KW-0456">Lyase</keyword>
<keyword id="KW-0479">Metal-binding</keyword>
<keyword id="KW-0511">Multifunctional enzyme</keyword>
<keyword id="KW-0862">Zinc</keyword>
<keyword id="KW-0863">Zinc-finger</keyword>
<proteinExistence type="inferred from homology"/>
<name>FPG_LISIN</name>
<gene>
    <name evidence="2" type="primary">mutM</name>
    <name evidence="2" type="synonym">fpg</name>
    <name type="ordered locus">lin1599</name>
</gene>
<feature type="initiator methionine" description="Removed" evidence="1">
    <location>
        <position position="1"/>
    </location>
</feature>
<feature type="chain" id="PRO_0000170833" description="Formamidopyrimidine-DNA glycosylase">
    <location>
        <begin position="2"/>
        <end position="273"/>
    </location>
</feature>
<feature type="zinc finger region" description="FPG-type" evidence="2">
    <location>
        <begin position="239"/>
        <end position="273"/>
    </location>
</feature>
<feature type="active site" description="Schiff-base intermediate with DNA" evidence="2">
    <location>
        <position position="2"/>
    </location>
</feature>
<feature type="active site" description="Proton donor" evidence="2">
    <location>
        <position position="3"/>
    </location>
</feature>
<feature type="active site" description="Proton donor; for beta-elimination activity" evidence="2">
    <location>
        <position position="59"/>
    </location>
</feature>
<feature type="active site" description="Proton donor; for delta-elimination activity" evidence="2">
    <location>
        <position position="263"/>
    </location>
</feature>
<feature type="binding site" evidence="2">
    <location>
        <position position="92"/>
    </location>
    <ligand>
        <name>DNA</name>
        <dbReference type="ChEBI" id="CHEBI:16991"/>
    </ligand>
</feature>
<feature type="binding site" evidence="2">
    <location>
        <position position="111"/>
    </location>
    <ligand>
        <name>DNA</name>
        <dbReference type="ChEBI" id="CHEBI:16991"/>
    </ligand>
</feature>
<dbReference type="EC" id="3.2.2.23" evidence="2"/>
<dbReference type="EC" id="4.2.99.18" evidence="2"/>
<dbReference type="EMBL" id="AL596169">
    <property type="protein sequence ID" value="CAC96830.1"/>
    <property type="molecule type" value="Genomic_DNA"/>
</dbReference>
<dbReference type="PIR" id="AF1632">
    <property type="entry name" value="AF1632"/>
</dbReference>
<dbReference type="RefSeq" id="WP_010991606.1">
    <property type="nucleotide sequence ID" value="NC_003212.1"/>
</dbReference>
<dbReference type="SMR" id="Q92BF1"/>
<dbReference type="STRING" id="272626.gene:17565930"/>
<dbReference type="KEGG" id="lin:mutM"/>
<dbReference type="eggNOG" id="COG0266">
    <property type="taxonomic scope" value="Bacteria"/>
</dbReference>
<dbReference type="HOGENOM" id="CLU_038423_1_2_9"/>
<dbReference type="OrthoDB" id="9800855at2"/>
<dbReference type="Proteomes" id="UP000002513">
    <property type="component" value="Chromosome"/>
</dbReference>
<dbReference type="GO" id="GO:0034039">
    <property type="term" value="F:8-oxo-7,8-dihydroguanine DNA N-glycosylase activity"/>
    <property type="evidence" value="ECO:0007669"/>
    <property type="project" value="TreeGrafter"/>
</dbReference>
<dbReference type="GO" id="GO:0140078">
    <property type="term" value="F:class I DNA-(apurinic or apyrimidinic site) endonuclease activity"/>
    <property type="evidence" value="ECO:0007669"/>
    <property type="project" value="UniProtKB-EC"/>
</dbReference>
<dbReference type="GO" id="GO:0003684">
    <property type="term" value="F:damaged DNA binding"/>
    <property type="evidence" value="ECO:0007669"/>
    <property type="project" value="InterPro"/>
</dbReference>
<dbReference type="GO" id="GO:0008270">
    <property type="term" value="F:zinc ion binding"/>
    <property type="evidence" value="ECO:0007669"/>
    <property type="project" value="UniProtKB-UniRule"/>
</dbReference>
<dbReference type="GO" id="GO:0006284">
    <property type="term" value="P:base-excision repair"/>
    <property type="evidence" value="ECO:0007669"/>
    <property type="project" value="InterPro"/>
</dbReference>
<dbReference type="CDD" id="cd08966">
    <property type="entry name" value="EcFpg-like_N"/>
    <property type="match status" value="1"/>
</dbReference>
<dbReference type="FunFam" id="1.10.8.50:FF:000003">
    <property type="entry name" value="Formamidopyrimidine-DNA glycosylase"/>
    <property type="match status" value="1"/>
</dbReference>
<dbReference type="FunFam" id="3.20.190.10:FF:000001">
    <property type="entry name" value="Formamidopyrimidine-DNA glycosylase"/>
    <property type="match status" value="1"/>
</dbReference>
<dbReference type="Gene3D" id="1.10.8.50">
    <property type="match status" value="1"/>
</dbReference>
<dbReference type="Gene3D" id="3.20.190.10">
    <property type="entry name" value="MutM-like, N-terminal"/>
    <property type="match status" value="1"/>
</dbReference>
<dbReference type="HAMAP" id="MF_00103">
    <property type="entry name" value="Fapy_DNA_glycosyl"/>
    <property type="match status" value="1"/>
</dbReference>
<dbReference type="InterPro" id="IPR015886">
    <property type="entry name" value="DNA_glyclase/AP_lyase_DNA-bd"/>
</dbReference>
<dbReference type="InterPro" id="IPR015887">
    <property type="entry name" value="DNA_glyclase_Znf_dom_DNA_BS"/>
</dbReference>
<dbReference type="InterPro" id="IPR020629">
    <property type="entry name" value="Formamido-pyr_DNA_Glyclase"/>
</dbReference>
<dbReference type="InterPro" id="IPR012319">
    <property type="entry name" value="FPG_cat"/>
</dbReference>
<dbReference type="InterPro" id="IPR035937">
    <property type="entry name" value="MutM-like_N-ter"/>
</dbReference>
<dbReference type="InterPro" id="IPR010979">
    <property type="entry name" value="Ribosomal_uS13-like_H2TH"/>
</dbReference>
<dbReference type="InterPro" id="IPR000214">
    <property type="entry name" value="Znf_DNA_glyclase/AP_lyase"/>
</dbReference>
<dbReference type="InterPro" id="IPR010663">
    <property type="entry name" value="Znf_FPG/IleRS"/>
</dbReference>
<dbReference type="NCBIfam" id="TIGR00577">
    <property type="entry name" value="fpg"/>
    <property type="match status" value="1"/>
</dbReference>
<dbReference type="NCBIfam" id="NF002211">
    <property type="entry name" value="PRK01103.1"/>
    <property type="match status" value="1"/>
</dbReference>
<dbReference type="PANTHER" id="PTHR22993">
    <property type="entry name" value="FORMAMIDOPYRIMIDINE-DNA GLYCOSYLASE"/>
    <property type="match status" value="1"/>
</dbReference>
<dbReference type="PANTHER" id="PTHR22993:SF9">
    <property type="entry name" value="FORMAMIDOPYRIMIDINE-DNA GLYCOSYLASE"/>
    <property type="match status" value="1"/>
</dbReference>
<dbReference type="Pfam" id="PF01149">
    <property type="entry name" value="Fapy_DNA_glyco"/>
    <property type="match status" value="1"/>
</dbReference>
<dbReference type="Pfam" id="PF06831">
    <property type="entry name" value="H2TH"/>
    <property type="match status" value="1"/>
</dbReference>
<dbReference type="Pfam" id="PF06827">
    <property type="entry name" value="zf-FPG_IleRS"/>
    <property type="match status" value="1"/>
</dbReference>
<dbReference type="SMART" id="SM00898">
    <property type="entry name" value="Fapy_DNA_glyco"/>
    <property type="match status" value="1"/>
</dbReference>
<dbReference type="SMART" id="SM01232">
    <property type="entry name" value="H2TH"/>
    <property type="match status" value="1"/>
</dbReference>
<dbReference type="SUPFAM" id="SSF57716">
    <property type="entry name" value="Glucocorticoid receptor-like (DNA-binding domain)"/>
    <property type="match status" value="1"/>
</dbReference>
<dbReference type="SUPFAM" id="SSF81624">
    <property type="entry name" value="N-terminal domain of MutM-like DNA repair proteins"/>
    <property type="match status" value="1"/>
</dbReference>
<dbReference type="SUPFAM" id="SSF46946">
    <property type="entry name" value="S13-like H2TH domain"/>
    <property type="match status" value="1"/>
</dbReference>
<dbReference type="PROSITE" id="PS51068">
    <property type="entry name" value="FPG_CAT"/>
    <property type="match status" value="1"/>
</dbReference>
<dbReference type="PROSITE" id="PS01242">
    <property type="entry name" value="ZF_FPG_1"/>
    <property type="match status" value="1"/>
</dbReference>
<dbReference type="PROSITE" id="PS51066">
    <property type="entry name" value="ZF_FPG_2"/>
    <property type="match status" value="1"/>
</dbReference>
<comment type="function">
    <text evidence="2">Involved in base excision repair of DNA damaged by oxidation or by mutagenic agents. Acts as a DNA glycosylase that recognizes and removes damaged bases. Has a preference for oxidized purines, such as 7,8-dihydro-8-oxoguanine (8-oxoG). Has AP (apurinic/apyrimidinic) lyase activity and introduces nicks in the DNA strand. Cleaves the DNA backbone by beta-delta elimination to generate a single-strand break at the site of the removed base with both 3'- and 5'-phosphates.</text>
</comment>
<comment type="catalytic activity">
    <reaction evidence="2">
        <text>Hydrolysis of DNA containing ring-opened 7-methylguanine residues, releasing 2,6-diamino-4-hydroxy-5-(N-methyl)formamidopyrimidine.</text>
        <dbReference type="EC" id="3.2.2.23"/>
    </reaction>
</comment>
<comment type="catalytic activity">
    <reaction evidence="2">
        <text>2'-deoxyribonucleotide-(2'-deoxyribose 5'-phosphate)-2'-deoxyribonucleotide-DNA = a 3'-end 2'-deoxyribonucleotide-(2,3-dehydro-2,3-deoxyribose 5'-phosphate)-DNA + a 5'-end 5'-phospho-2'-deoxyribonucleoside-DNA + H(+)</text>
        <dbReference type="Rhea" id="RHEA:66592"/>
        <dbReference type="Rhea" id="RHEA-COMP:13180"/>
        <dbReference type="Rhea" id="RHEA-COMP:16897"/>
        <dbReference type="Rhea" id="RHEA-COMP:17067"/>
        <dbReference type="ChEBI" id="CHEBI:15378"/>
        <dbReference type="ChEBI" id="CHEBI:136412"/>
        <dbReference type="ChEBI" id="CHEBI:157695"/>
        <dbReference type="ChEBI" id="CHEBI:167181"/>
        <dbReference type="EC" id="4.2.99.18"/>
    </reaction>
</comment>
<comment type="cofactor">
    <cofactor evidence="2">
        <name>Zn(2+)</name>
        <dbReference type="ChEBI" id="CHEBI:29105"/>
    </cofactor>
    <text evidence="2">Binds 1 zinc ion per subunit.</text>
</comment>
<comment type="subunit">
    <text evidence="2">Monomer.</text>
</comment>
<comment type="similarity">
    <text evidence="2">Belongs to the FPG family.</text>
</comment>
<reference key="1">
    <citation type="journal article" date="2001" name="Science">
        <title>Comparative genomics of Listeria species.</title>
        <authorList>
            <person name="Glaser P."/>
            <person name="Frangeul L."/>
            <person name="Buchrieser C."/>
            <person name="Rusniok C."/>
            <person name="Amend A."/>
            <person name="Baquero F."/>
            <person name="Berche P."/>
            <person name="Bloecker H."/>
            <person name="Brandt P."/>
            <person name="Chakraborty T."/>
            <person name="Charbit A."/>
            <person name="Chetouani F."/>
            <person name="Couve E."/>
            <person name="de Daruvar A."/>
            <person name="Dehoux P."/>
            <person name="Domann E."/>
            <person name="Dominguez-Bernal G."/>
            <person name="Duchaud E."/>
            <person name="Durant L."/>
            <person name="Dussurget O."/>
            <person name="Entian K.-D."/>
            <person name="Fsihi H."/>
            <person name="Garcia-del Portillo F."/>
            <person name="Garrido P."/>
            <person name="Gautier L."/>
            <person name="Goebel W."/>
            <person name="Gomez-Lopez N."/>
            <person name="Hain T."/>
            <person name="Hauf J."/>
            <person name="Jackson D."/>
            <person name="Jones L.-M."/>
            <person name="Kaerst U."/>
            <person name="Kreft J."/>
            <person name="Kuhn M."/>
            <person name="Kunst F."/>
            <person name="Kurapkat G."/>
            <person name="Madueno E."/>
            <person name="Maitournam A."/>
            <person name="Mata Vicente J."/>
            <person name="Ng E."/>
            <person name="Nedjari H."/>
            <person name="Nordsiek G."/>
            <person name="Novella S."/>
            <person name="de Pablos B."/>
            <person name="Perez-Diaz J.-C."/>
            <person name="Purcell R."/>
            <person name="Remmel B."/>
            <person name="Rose M."/>
            <person name="Schlueter T."/>
            <person name="Simoes N."/>
            <person name="Tierrez A."/>
            <person name="Vazquez-Boland J.-A."/>
            <person name="Voss H."/>
            <person name="Wehland J."/>
            <person name="Cossart P."/>
        </authorList>
    </citation>
    <scope>NUCLEOTIDE SEQUENCE [LARGE SCALE GENOMIC DNA]</scope>
    <source>
        <strain>ATCC BAA-680 / CLIP 11262</strain>
    </source>
</reference>